<keyword id="KW-0028">Amino-acid biosynthesis</keyword>
<keyword id="KW-0067">ATP-binding</keyword>
<keyword id="KW-0418">Kinase</keyword>
<keyword id="KW-0547">Nucleotide-binding</keyword>
<keyword id="KW-0791">Threonine biosynthesis</keyword>
<keyword id="KW-0808">Transferase</keyword>
<protein>
    <recommendedName>
        <fullName evidence="1">Homoserine kinase</fullName>
        <shortName evidence="1">HK</shortName>
        <shortName evidence="1">HSK</shortName>
        <ecNumber evidence="1">2.7.1.39</ecNumber>
    </recommendedName>
</protein>
<proteinExistence type="inferred from homology"/>
<organism>
    <name type="scientific">Methylorubrum populi (strain ATCC BAA-705 / NCIMB 13946 / BJ001)</name>
    <name type="common">Methylobacterium populi</name>
    <dbReference type="NCBI Taxonomy" id="441620"/>
    <lineage>
        <taxon>Bacteria</taxon>
        <taxon>Pseudomonadati</taxon>
        <taxon>Pseudomonadota</taxon>
        <taxon>Alphaproteobacteria</taxon>
        <taxon>Hyphomicrobiales</taxon>
        <taxon>Methylobacteriaceae</taxon>
        <taxon>Methylorubrum</taxon>
    </lineage>
</organism>
<name>KHSE_METPB</name>
<evidence type="ECO:0000255" key="1">
    <source>
        <dbReference type="HAMAP-Rule" id="MF_00301"/>
    </source>
</evidence>
<reference key="1">
    <citation type="submission" date="2008-04" db="EMBL/GenBank/DDBJ databases">
        <title>Complete sequence of chromosome of Methylobacterium populi BJ001.</title>
        <authorList>
            <consortium name="US DOE Joint Genome Institute"/>
            <person name="Copeland A."/>
            <person name="Lucas S."/>
            <person name="Lapidus A."/>
            <person name="Glavina del Rio T."/>
            <person name="Dalin E."/>
            <person name="Tice H."/>
            <person name="Bruce D."/>
            <person name="Goodwin L."/>
            <person name="Pitluck S."/>
            <person name="Chertkov O."/>
            <person name="Brettin T."/>
            <person name="Detter J.C."/>
            <person name="Han C."/>
            <person name="Kuske C.R."/>
            <person name="Schmutz J."/>
            <person name="Larimer F."/>
            <person name="Land M."/>
            <person name="Hauser L."/>
            <person name="Kyrpides N."/>
            <person name="Mikhailova N."/>
            <person name="Marx C."/>
            <person name="Richardson P."/>
        </authorList>
    </citation>
    <scope>NUCLEOTIDE SEQUENCE [LARGE SCALE GENOMIC DNA]</scope>
    <source>
        <strain>ATCC BAA-705 / NCIMB 13946 / BJ001</strain>
    </source>
</reference>
<comment type="catalytic activity">
    <reaction evidence="1">
        <text>L-homoserine + ATP = O-phospho-L-homoserine + ADP + H(+)</text>
        <dbReference type="Rhea" id="RHEA:13985"/>
        <dbReference type="ChEBI" id="CHEBI:15378"/>
        <dbReference type="ChEBI" id="CHEBI:30616"/>
        <dbReference type="ChEBI" id="CHEBI:57476"/>
        <dbReference type="ChEBI" id="CHEBI:57590"/>
        <dbReference type="ChEBI" id="CHEBI:456216"/>
        <dbReference type="EC" id="2.7.1.39"/>
    </reaction>
</comment>
<comment type="pathway">
    <text evidence="1">Amino-acid biosynthesis; L-threonine biosynthesis; L-threonine from L-aspartate: step 4/5.</text>
</comment>
<comment type="similarity">
    <text evidence="1">Belongs to the pseudomonas-type ThrB family.</text>
</comment>
<accession>B1ZC86</accession>
<gene>
    <name evidence="1" type="primary">thrB</name>
    <name type="ordered locus">Mpop_2622</name>
</gene>
<dbReference type="EC" id="2.7.1.39" evidence="1"/>
<dbReference type="EMBL" id="CP001029">
    <property type="protein sequence ID" value="ACB80779.1"/>
    <property type="molecule type" value="Genomic_DNA"/>
</dbReference>
<dbReference type="RefSeq" id="WP_012454501.1">
    <property type="nucleotide sequence ID" value="NC_010725.1"/>
</dbReference>
<dbReference type="SMR" id="B1ZC86"/>
<dbReference type="STRING" id="441620.Mpop_2622"/>
<dbReference type="KEGG" id="mpo:Mpop_2622"/>
<dbReference type="eggNOG" id="COG2334">
    <property type="taxonomic scope" value="Bacteria"/>
</dbReference>
<dbReference type="HOGENOM" id="CLU_053300_1_0_5"/>
<dbReference type="OrthoDB" id="9777460at2"/>
<dbReference type="UniPathway" id="UPA00050">
    <property type="reaction ID" value="UER00064"/>
</dbReference>
<dbReference type="Proteomes" id="UP000007136">
    <property type="component" value="Chromosome"/>
</dbReference>
<dbReference type="GO" id="GO:0005524">
    <property type="term" value="F:ATP binding"/>
    <property type="evidence" value="ECO:0007669"/>
    <property type="project" value="UniProtKB-KW"/>
</dbReference>
<dbReference type="GO" id="GO:0004413">
    <property type="term" value="F:homoserine kinase activity"/>
    <property type="evidence" value="ECO:0007669"/>
    <property type="project" value="UniProtKB-UniRule"/>
</dbReference>
<dbReference type="GO" id="GO:0009088">
    <property type="term" value="P:threonine biosynthetic process"/>
    <property type="evidence" value="ECO:0007669"/>
    <property type="project" value="UniProtKB-UniRule"/>
</dbReference>
<dbReference type="CDD" id="cd05153">
    <property type="entry name" value="HomoserineK_II"/>
    <property type="match status" value="1"/>
</dbReference>
<dbReference type="Gene3D" id="3.90.1200.10">
    <property type="match status" value="1"/>
</dbReference>
<dbReference type="Gene3D" id="3.30.200.20">
    <property type="entry name" value="Phosphorylase Kinase, domain 1"/>
    <property type="match status" value="1"/>
</dbReference>
<dbReference type="HAMAP" id="MF_00301">
    <property type="entry name" value="Homoser_kinase_2"/>
    <property type="match status" value="1"/>
</dbReference>
<dbReference type="InterPro" id="IPR002575">
    <property type="entry name" value="Aminoglycoside_PTrfase"/>
</dbReference>
<dbReference type="InterPro" id="IPR005280">
    <property type="entry name" value="Homoserine_kinase_II"/>
</dbReference>
<dbReference type="InterPro" id="IPR011009">
    <property type="entry name" value="Kinase-like_dom_sf"/>
</dbReference>
<dbReference type="InterPro" id="IPR050249">
    <property type="entry name" value="Pseudomonas-type_ThrB"/>
</dbReference>
<dbReference type="NCBIfam" id="NF003558">
    <property type="entry name" value="PRK05231.1"/>
    <property type="match status" value="1"/>
</dbReference>
<dbReference type="NCBIfam" id="TIGR00938">
    <property type="entry name" value="thrB_alt"/>
    <property type="match status" value="1"/>
</dbReference>
<dbReference type="PANTHER" id="PTHR21064:SF6">
    <property type="entry name" value="AMINOGLYCOSIDE PHOSPHOTRANSFERASE DOMAIN-CONTAINING PROTEIN"/>
    <property type="match status" value="1"/>
</dbReference>
<dbReference type="PANTHER" id="PTHR21064">
    <property type="entry name" value="AMINOGLYCOSIDE PHOSPHOTRANSFERASE DOMAIN-CONTAINING PROTEIN-RELATED"/>
    <property type="match status" value="1"/>
</dbReference>
<dbReference type="Pfam" id="PF01636">
    <property type="entry name" value="APH"/>
    <property type="match status" value="1"/>
</dbReference>
<dbReference type="SUPFAM" id="SSF56112">
    <property type="entry name" value="Protein kinase-like (PK-like)"/>
    <property type="match status" value="1"/>
</dbReference>
<feature type="chain" id="PRO_1000115433" description="Homoserine kinase">
    <location>
        <begin position="1"/>
        <end position="321"/>
    </location>
</feature>
<sequence length="321" mass="34909">MAVYTDVSDEALRAFLQEYELGELLSYKGIAEGVENSNFYLHTSTGHYILTLYEKRVSEADLPFFINLMGHLARAGLACPQPVRNRAGTALGRLCGRPAAIVTFLEGVSLSRPNAEHCRALGAALAGLHAAGRDFPMVRENNLSVGAWRPLFAQAEAQADTVAPGLAARTRADLDILEGAWPKDLPGGVIHADLFTDNVFFIGDAVSGLIDFYFACTDAFAYDLAISLNAWCFDADGTFHRDKAGAMLAGYDAVRTLEPAEIAAIPVLARGAAMRFMLTRLVDWLNVPPGALVQPKDPLEYDRRLAFHRTAADARDYGWEG</sequence>